<keyword id="KW-0025">Alternative splicing</keyword>
<keyword id="KW-0328">Glycosyltransferase</keyword>
<keyword id="KW-0333">Golgi apparatus</keyword>
<keyword id="KW-0464">Manganese</keyword>
<keyword id="KW-0472">Membrane</keyword>
<keyword id="KW-1185">Reference proteome</keyword>
<keyword id="KW-0735">Signal-anchor</keyword>
<keyword id="KW-0808">Transferase</keyword>
<keyword id="KW-0812">Transmembrane</keyword>
<keyword id="KW-1133">Transmembrane helix</keyword>
<dbReference type="EC" id="2.4.1.-"/>
<dbReference type="EMBL" id="AL035440">
    <property type="protein sequence ID" value="CAB36540.1"/>
    <property type="status" value="ALT_SEQ"/>
    <property type="molecule type" value="Genomic_DNA"/>
</dbReference>
<dbReference type="EMBL" id="AL161566">
    <property type="protein sequence ID" value="CAB79549.1"/>
    <property type="status" value="ALT_SEQ"/>
    <property type="molecule type" value="Genomic_DNA"/>
</dbReference>
<dbReference type="EMBL" id="CP002687">
    <property type="protein sequence ID" value="AEE85272.1"/>
    <property type="molecule type" value="Genomic_DNA"/>
</dbReference>
<dbReference type="EMBL" id="CP002687">
    <property type="protein sequence ID" value="AEE85273.1"/>
    <property type="molecule type" value="Genomic_DNA"/>
</dbReference>
<dbReference type="EMBL" id="AY085383">
    <property type="protein sequence ID" value="AAM62612.1"/>
    <property type="molecule type" value="mRNA"/>
</dbReference>
<dbReference type="PIR" id="T04817">
    <property type="entry name" value="T04817"/>
</dbReference>
<dbReference type="RefSeq" id="NP_567762.1">
    <molecule id="Q8LEJ9-1"/>
    <property type="nucleotide sequence ID" value="NM_118828.4"/>
</dbReference>
<dbReference type="RefSeq" id="NP_849454.1">
    <molecule id="Q8LEJ9-2"/>
    <property type="nucleotide sequence ID" value="NM_179123.3"/>
</dbReference>
<dbReference type="SMR" id="Q8LEJ9"/>
<dbReference type="BioGRID" id="14088">
    <property type="interactions" value="1"/>
</dbReference>
<dbReference type="FunCoup" id="Q8LEJ9">
    <property type="interactions" value="2371"/>
</dbReference>
<dbReference type="IntAct" id="Q8LEJ9">
    <property type="interactions" value="1"/>
</dbReference>
<dbReference type="STRING" id="3702.Q8LEJ9"/>
<dbReference type="CAZy" id="GT31">
    <property type="family name" value="Glycosyltransferase Family 31"/>
</dbReference>
<dbReference type="GlyGen" id="Q8LEJ9">
    <property type="glycosylation" value="1 site"/>
</dbReference>
<dbReference type="PaxDb" id="3702-AT4G26940.1"/>
<dbReference type="ProteomicsDB" id="241115">
    <molecule id="Q8LEJ9-1"/>
</dbReference>
<dbReference type="EnsemblPlants" id="AT4G26940.1">
    <molecule id="Q8LEJ9-1"/>
    <property type="protein sequence ID" value="AT4G26940.1"/>
    <property type="gene ID" value="AT4G26940"/>
</dbReference>
<dbReference type="EnsemblPlants" id="AT4G26940.2">
    <molecule id="Q8LEJ9-2"/>
    <property type="protein sequence ID" value="AT4G26940.2"/>
    <property type="gene ID" value="AT4G26940"/>
</dbReference>
<dbReference type="GeneID" id="828801"/>
<dbReference type="Gramene" id="AT4G26940.1">
    <molecule id="Q8LEJ9-1"/>
    <property type="protein sequence ID" value="AT4G26940.1"/>
    <property type="gene ID" value="AT4G26940"/>
</dbReference>
<dbReference type="Gramene" id="AT4G26940.2">
    <molecule id="Q8LEJ9-2"/>
    <property type="protein sequence ID" value="AT4G26940.2"/>
    <property type="gene ID" value="AT4G26940"/>
</dbReference>
<dbReference type="KEGG" id="ath:AT4G26940"/>
<dbReference type="Araport" id="AT4G26940"/>
<dbReference type="TAIR" id="AT4G26940"/>
<dbReference type="eggNOG" id="KOG2288">
    <property type="taxonomic scope" value="Eukaryota"/>
</dbReference>
<dbReference type="HOGENOM" id="CLU_040730_3_0_1"/>
<dbReference type="InParanoid" id="Q8LEJ9"/>
<dbReference type="OMA" id="FTDRMWA"/>
<dbReference type="OrthoDB" id="1158011at2759"/>
<dbReference type="PhylomeDB" id="Q8LEJ9"/>
<dbReference type="UniPathway" id="UPA00378"/>
<dbReference type="PRO" id="PR:Q8LEJ9"/>
<dbReference type="Proteomes" id="UP000006548">
    <property type="component" value="Chromosome 4"/>
</dbReference>
<dbReference type="ExpressionAtlas" id="Q8LEJ9">
    <property type="expression patterns" value="baseline and differential"/>
</dbReference>
<dbReference type="GO" id="GO:0000139">
    <property type="term" value="C:Golgi membrane"/>
    <property type="evidence" value="ECO:0007669"/>
    <property type="project" value="UniProtKB-SubCell"/>
</dbReference>
<dbReference type="GO" id="GO:0016758">
    <property type="term" value="F:hexosyltransferase activity"/>
    <property type="evidence" value="ECO:0007669"/>
    <property type="project" value="InterPro"/>
</dbReference>
<dbReference type="GO" id="GO:0006486">
    <property type="term" value="P:protein glycosylation"/>
    <property type="evidence" value="ECO:0007669"/>
    <property type="project" value="UniProtKB-UniPathway"/>
</dbReference>
<dbReference type="FunFam" id="3.90.550.50:FF:000002">
    <property type="entry name" value="Hexosyltransferase"/>
    <property type="match status" value="1"/>
</dbReference>
<dbReference type="Gene3D" id="3.90.550.50">
    <property type="match status" value="1"/>
</dbReference>
<dbReference type="InterPro" id="IPR025298">
    <property type="entry name" value="DUF4094"/>
</dbReference>
<dbReference type="InterPro" id="IPR002659">
    <property type="entry name" value="Glyco_trans_31"/>
</dbReference>
<dbReference type="PANTHER" id="PTHR11214:SF5">
    <property type="entry name" value="BETA-1,3-GALACTOSYLTRANSFERASE 4-RELATED"/>
    <property type="match status" value="1"/>
</dbReference>
<dbReference type="PANTHER" id="PTHR11214">
    <property type="entry name" value="BETA-1,3-N-ACETYLGLUCOSAMINYLTRANSFERASE"/>
    <property type="match status" value="1"/>
</dbReference>
<dbReference type="Pfam" id="PF13334">
    <property type="entry name" value="DUF4094"/>
    <property type="match status" value="1"/>
</dbReference>
<dbReference type="Pfam" id="PF01762">
    <property type="entry name" value="Galactosyl_T"/>
    <property type="match status" value="1"/>
</dbReference>
<proteinExistence type="evidence at transcript level"/>
<reference key="1">
    <citation type="journal article" date="1999" name="Nature">
        <title>Sequence and analysis of chromosome 4 of the plant Arabidopsis thaliana.</title>
        <authorList>
            <person name="Mayer K.F.X."/>
            <person name="Schueller C."/>
            <person name="Wambutt R."/>
            <person name="Murphy G."/>
            <person name="Volckaert G."/>
            <person name="Pohl T."/>
            <person name="Duesterhoeft A."/>
            <person name="Stiekema W."/>
            <person name="Entian K.-D."/>
            <person name="Terryn N."/>
            <person name="Harris B."/>
            <person name="Ansorge W."/>
            <person name="Brandt P."/>
            <person name="Grivell L.A."/>
            <person name="Rieger M."/>
            <person name="Weichselgartner M."/>
            <person name="de Simone V."/>
            <person name="Obermaier B."/>
            <person name="Mache R."/>
            <person name="Mueller M."/>
            <person name="Kreis M."/>
            <person name="Delseny M."/>
            <person name="Puigdomenech P."/>
            <person name="Watson M."/>
            <person name="Schmidtheini T."/>
            <person name="Reichert B."/>
            <person name="Portetelle D."/>
            <person name="Perez-Alonso M."/>
            <person name="Boutry M."/>
            <person name="Bancroft I."/>
            <person name="Vos P."/>
            <person name="Hoheisel J."/>
            <person name="Zimmermann W."/>
            <person name="Wedler H."/>
            <person name="Ridley P."/>
            <person name="Langham S.-A."/>
            <person name="McCullagh B."/>
            <person name="Bilham L."/>
            <person name="Robben J."/>
            <person name="van der Schueren J."/>
            <person name="Grymonprez B."/>
            <person name="Chuang Y.-J."/>
            <person name="Vandenbussche F."/>
            <person name="Braeken M."/>
            <person name="Weltjens I."/>
            <person name="Voet M."/>
            <person name="Bastiaens I."/>
            <person name="Aert R."/>
            <person name="Defoor E."/>
            <person name="Weitzenegger T."/>
            <person name="Bothe G."/>
            <person name="Ramsperger U."/>
            <person name="Hilbert H."/>
            <person name="Braun M."/>
            <person name="Holzer E."/>
            <person name="Brandt A."/>
            <person name="Peters S."/>
            <person name="van Staveren M."/>
            <person name="Dirkse W."/>
            <person name="Mooijman P."/>
            <person name="Klein Lankhorst R."/>
            <person name="Rose M."/>
            <person name="Hauf J."/>
            <person name="Koetter P."/>
            <person name="Berneiser S."/>
            <person name="Hempel S."/>
            <person name="Feldpausch M."/>
            <person name="Lamberth S."/>
            <person name="Van den Daele H."/>
            <person name="De Keyser A."/>
            <person name="Buysshaert C."/>
            <person name="Gielen J."/>
            <person name="Villarroel R."/>
            <person name="De Clercq R."/>
            <person name="van Montagu M."/>
            <person name="Rogers J."/>
            <person name="Cronin A."/>
            <person name="Quail M.A."/>
            <person name="Bray-Allen S."/>
            <person name="Clark L."/>
            <person name="Doggett J."/>
            <person name="Hall S."/>
            <person name="Kay M."/>
            <person name="Lennard N."/>
            <person name="McLay K."/>
            <person name="Mayes R."/>
            <person name="Pettett A."/>
            <person name="Rajandream M.A."/>
            <person name="Lyne M."/>
            <person name="Benes V."/>
            <person name="Rechmann S."/>
            <person name="Borkova D."/>
            <person name="Bloecker H."/>
            <person name="Scharfe M."/>
            <person name="Grimm M."/>
            <person name="Loehnert T.-H."/>
            <person name="Dose S."/>
            <person name="de Haan M."/>
            <person name="Maarse A.C."/>
            <person name="Schaefer M."/>
            <person name="Mueller-Auer S."/>
            <person name="Gabel C."/>
            <person name="Fuchs M."/>
            <person name="Fartmann B."/>
            <person name="Granderath K."/>
            <person name="Dauner D."/>
            <person name="Herzl A."/>
            <person name="Neumann S."/>
            <person name="Argiriou A."/>
            <person name="Vitale D."/>
            <person name="Liguori R."/>
            <person name="Piravandi E."/>
            <person name="Massenet O."/>
            <person name="Quigley F."/>
            <person name="Clabauld G."/>
            <person name="Muendlein A."/>
            <person name="Felber R."/>
            <person name="Schnabl S."/>
            <person name="Hiller R."/>
            <person name="Schmidt W."/>
            <person name="Lecharny A."/>
            <person name="Aubourg S."/>
            <person name="Chefdor F."/>
            <person name="Cooke R."/>
            <person name="Berger C."/>
            <person name="Monfort A."/>
            <person name="Casacuberta E."/>
            <person name="Gibbons T."/>
            <person name="Weber N."/>
            <person name="Vandenbol M."/>
            <person name="Bargues M."/>
            <person name="Terol J."/>
            <person name="Torres A."/>
            <person name="Perez-Perez A."/>
            <person name="Purnelle B."/>
            <person name="Bent E."/>
            <person name="Johnson S."/>
            <person name="Tacon D."/>
            <person name="Jesse T."/>
            <person name="Heijnen L."/>
            <person name="Schwarz S."/>
            <person name="Scholler P."/>
            <person name="Heber S."/>
            <person name="Francs P."/>
            <person name="Bielke C."/>
            <person name="Frishman D."/>
            <person name="Haase D."/>
            <person name="Lemcke K."/>
            <person name="Mewes H.-W."/>
            <person name="Stocker S."/>
            <person name="Zaccaria P."/>
            <person name="Bevan M."/>
            <person name="Wilson R.K."/>
            <person name="de la Bastide M."/>
            <person name="Habermann K."/>
            <person name="Parnell L."/>
            <person name="Dedhia N."/>
            <person name="Gnoj L."/>
            <person name="Schutz K."/>
            <person name="Huang E."/>
            <person name="Spiegel L."/>
            <person name="Sekhon M."/>
            <person name="Murray J."/>
            <person name="Sheet P."/>
            <person name="Cordes M."/>
            <person name="Abu-Threideh J."/>
            <person name="Stoneking T."/>
            <person name="Kalicki J."/>
            <person name="Graves T."/>
            <person name="Harmon G."/>
            <person name="Edwards J."/>
            <person name="Latreille P."/>
            <person name="Courtney L."/>
            <person name="Cloud J."/>
            <person name="Abbott A."/>
            <person name="Scott K."/>
            <person name="Johnson D."/>
            <person name="Minx P."/>
            <person name="Bentley D."/>
            <person name="Fulton B."/>
            <person name="Miller N."/>
            <person name="Greco T."/>
            <person name="Kemp K."/>
            <person name="Kramer J."/>
            <person name="Fulton L."/>
            <person name="Mardis E."/>
            <person name="Dante M."/>
            <person name="Pepin K."/>
            <person name="Hillier L.W."/>
            <person name="Nelson J."/>
            <person name="Spieth J."/>
            <person name="Ryan E."/>
            <person name="Andrews S."/>
            <person name="Geisel C."/>
            <person name="Layman D."/>
            <person name="Du H."/>
            <person name="Ali J."/>
            <person name="Berghoff A."/>
            <person name="Jones K."/>
            <person name="Drone K."/>
            <person name="Cotton M."/>
            <person name="Joshu C."/>
            <person name="Antonoiu B."/>
            <person name="Zidanic M."/>
            <person name="Strong C."/>
            <person name="Sun H."/>
            <person name="Lamar B."/>
            <person name="Yordan C."/>
            <person name="Ma P."/>
            <person name="Zhong J."/>
            <person name="Preston R."/>
            <person name="Vil D."/>
            <person name="Shekher M."/>
            <person name="Matero A."/>
            <person name="Shah R."/>
            <person name="Swaby I.K."/>
            <person name="O'Shaughnessy A."/>
            <person name="Rodriguez M."/>
            <person name="Hoffman J."/>
            <person name="Till S."/>
            <person name="Granat S."/>
            <person name="Shohdy N."/>
            <person name="Hasegawa A."/>
            <person name="Hameed A."/>
            <person name="Lodhi M."/>
            <person name="Johnson A."/>
            <person name="Chen E."/>
            <person name="Marra M.A."/>
            <person name="Martienssen R."/>
            <person name="McCombie W.R."/>
        </authorList>
    </citation>
    <scope>NUCLEOTIDE SEQUENCE [LARGE SCALE GENOMIC DNA]</scope>
    <source>
        <strain>cv. Columbia</strain>
    </source>
</reference>
<reference key="2">
    <citation type="journal article" date="2017" name="Plant J.">
        <title>Araport11: a complete reannotation of the Arabidopsis thaliana reference genome.</title>
        <authorList>
            <person name="Cheng C.Y."/>
            <person name="Krishnakumar V."/>
            <person name="Chan A.P."/>
            <person name="Thibaud-Nissen F."/>
            <person name="Schobel S."/>
            <person name="Town C.D."/>
        </authorList>
    </citation>
    <scope>GENOME REANNOTATION</scope>
    <source>
        <strain>cv. Columbia</strain>
    </source>
</reference>
<reference key="3">
    <citation type="submission" date="2002-03" db="EMBL/GenBank/DDBJ databases">
        <title>Full-length cDNA from Arabidopsis thaliana.</title>
        <authorList>
            <person name="Brover V.V."/>
            <person name="Troukhan M.E."/>
            <person name="Alexandrov N.A."/>
            <person name="Lu Y.-P."/>
            <person name="Flavell R.B."/>
            <person name="Feldmann K.A."/>
        </authorList>
    </citation>
    <scope>NUCLEOTIDE SEQUENCE [LARGE SCALE MRNA] (ISOFORM 1)</scope>
</reference>
<reference key="4">
    <citation type="journal article" date="2008" name="Plant Mol. Biol.">
        <title>Identification of a novel group of putative Arabidopsis thaliana beta-(1,3)-galactosyltransferases.</title>
        <authorList>
            <person name="Qu Y."/>
            <person name="Egelund J."/>
            <person name="Gilson P.R."/>
            <person name="Houghton F."/>
            <person name="Gleeson P.A."/>
            <person name="Schultz C.J."/>
            <person name="Bacic A."/>
        </authorList>
    </citation>
    <scope>GENE FAMILY</scope>
    <scope>NOMENCLATURE</scope>
</reference>
<accession>Q8LEJ9</accession>
<accession>Q3E9W1</accession>
<accession>Q9SZ33</accession>
<comment type="function">
    <text evidence="1">Beta-1,3-galactosyltransferase that transfers galactose from UDP-galactose to substrates with a terminal glycosyl residue.</text>
</comment>
<comment type="cofactor">
    <cofactor evidence="1">
        <name>Mn(2+)</name>
        <dbReference type="ChEBI" id="CHEBI:29035"/>
    </cofactor>
</comment>
<comment type="pathway">
    <text>Protein modification; protein glycosylation.</text>
</comment>
<comment type="subcellular location">
    <subcellularLocation>
        <location evidence="3">Golgi apparatus membrane</location>
        <topology evidence="3">Single-pass type II membrane protein</topology>
    </subcellularLocation>
</comment>
<comment type="alternative products">
    <event type="alternative splicing"/>
    <isoform>
        <id>Q8LEJ9-1</id>
        <name>1</name>
        <sequence type="displayed"/>
    </isoform>
    <isoform>
        <id>Q8LEJ9-2</id>
        <name>2</name>
        <sequence type="described" ref="VSP_036144 VSP_036145"/>
    </isoform>
</comment>
<comment type="miscellaneous">
    <molecule>Isoform 2</molecule>
    <text evidence="3">May be due to a competing acceptor splice site.</text>
</comment>
<comment type="similarity">
    <text evidence="3">Belongs to the glycosyltransferase 31 family.</text>
</comment>
<comment type="sequence caution" evidence="3">
    <conflict type="erroneous gene model prediction">
        <sequence resource="EMBL-CDS" id="CAB36540"/>
    </conflict>
</comment>
<comment type="sequence caution" evidence="3">
    <conflict type="erroneous gene model prediction">
        <sequence resource="EMBL-CDS" id="CAB79549"/>
    </conflict>
</comment>
<protein>
    <recommendedName>
        <fullName>Probable beta-1,3-galactosyltransferase 4</fullName>
        <ecNumber>2.4.1.-</ecNumber>
    </recommendedName>
</protein>
<gene>
    <name type="primary">B3GALT4</name>
    <name type="ordered locus">At4g26940</name>
    <name type="ORF">F10M23.280</name>
</gene>
<feature type="chain" id="PRO_0000359414" description="Probable beta-1,3-galactosyltransferase 4">
    <location>
        <begin position="1"/>
        <end position="407"/>
    </location>
</feature>
<feature type="transmembrane region" description="Helical; Signal-anchor for type II membrane protein" evidence="2">
    <location>
        <begin position="23"/>
        <end position="39"/>
    </location>
</feature>
<feature type="splice variant" id="VSP_036144" description="In isoform 2." evidence="3">
    <original>GVRYHEPEYWKFGEEGNKYFRHATG</original>
    <variation>SALCNIQGVGVLHIDKPKRTSQICE</variation>
    <location>
        <begin position="282"/>
        <end position="306"/>
    </location>
</feature>
<feature type="splice variant" id="VSP_036145" description="In isoform 2." evidence="3">
    <location>
        <begin position="307"/>
        <end position="407"/>
    </location>
</feature>
<sequence>MSLKHHHRGLELSASKSFVSKKWTLFLCIGFFCAGILFSDRMWPEPESNVVSRDTVASDERLRLESEDCDSSKKGLKRESKDILGDVYKSPDAIQTLDKTISKLETELADARAAQESIMNGSPVSDDFKLPETVTKRKYLMVVGVNTAFSSRKRRDSVRATWMPPGEERKKLEEEKGIVMRFVIGHSSTPGGILDRAIQAEESKHGDFLRLDHVEGYLELSAKTKTYFTTAFAMWDADFYVKVDDDVHVNIATLGAELARYRMKPRVYIGCMKSGPVLAQKGVRYHEPEYWKFGEEGNKYFRHATGQLYAISRELASYISINQNVLHKYVNEDVSLGSWFLGLDVEHVDDRRLCCGTTDCEWKAQAGNICVASFDWSCSGICRSADRMKDVHRRCGEGEKALLAASF</sequence>
<name>B3GT4_ARATH</name>
<organism>
    <name type="scientific">Arabidopsis thaliana</name>
    <name type="common">Mouse-ear cress</name>
    <dbReference type="NCBI Taxonomy" id="3702"/>
    <lineage>
        <taxon>Eukaryota</taxon>
        <taxon>Viridiplantae</taxon>
        <taxon>Streptophyta</taxon>
        <taxon>Embryophyta</taxon>
        <taxon>Tracheophyta</taxon>
        <taxon>Spermatophyta</taxon>
        <taxon>Magnoliopsida</taxon>
        <taxon>eudicotyledons</taxon>
        <taxon>Gunneridae</taxon>
        <taxon>Pentapetalae</taxon>
        <taxon>rosids</taxon>
        <taxon>malvids</taxon>
        <taxon>Brassicales</taxon>
        <taxon>Brassicaceae</taxon>
        <taxon>Camelineae</taxon>
        <taxon>Arabidopsis</taxon>
    </lineage>
</organism>
<evidence type="ECO:0000250" key="1"/>
<evidence type="ECO:0000255" key="2"/>
<evidence type="ECO:0000305" key="3"/>